<protein>
    <recommendedName>
        <fullName>Choline O-acetyltransferase</fullName>
        <shortName>CHOACTase</shortName>
        <shortName>ChAT</shortName>
        <shortName>Choline acetylase</shortName>
        <ecNumber>2.3.1.6</ecNumber>
    </recommendedName>
</protein>
<proteinExistence type="evidence at protein level"/>
<sequence>MPILEKAPQKMPVKASSWEELDLPKLPVPPLQQTLATYLQCMQHLVPEEQFRKSQAIVKRFGAPGGLGETLQEKLLERQEKTANWVSEYWLNDMYLNNRLALPVNSSPAVIFARQHFQDTNDQLRFAACLISGVLSYKTLLDSHSLPTDWAKGQLSGQPLCMKQYYRLFSSYRLPGHTQDTLVAQKSSIMPEPEHVIVACCNQFFVLDVVINFRRLSEGDLFTQLRKIVKMASNEDERLPPIGLLTSDGRSEWAKARTVLLKDSTNRDSLDMIERCICLVCLDGPGTGELSDTHRALQLLHGGGCSLNGANRWYDKSLQFVVGRDGTCGVVCEHSPFDGIVLVQCTEHLLKHMMTSNKKLVRADSVSELPAPRRLRLKCSPETQGHLASSAEKLQRIVKNLDFIVYKFDNYGKTFIKKQKYSPDGFIQVALQLAYYRLYQRLVPTYESASIRRFQEGRVDNIRSATPEALAFVQAMTDHKAAMPASEKLQLLQTAMQAHKQYTVMAITGMAIDNHLLALRELARDLCKEPPEMFMDETYLMSNRFVLSTSQVPTTMEMFCCYGPVVPNGNGACYNPQPEAITFCISSFHSCKETSSVEFAEAVGASLVDMRDLCSSRQPADSKPPAPKEKARGPSQAKQS</sequence>
<keyword id="KW-0002">3D-structure</keyword>
<keyword id="KW-0012">Acyltransferase</keyword>
<keyword id="KW-0530">Neurotransmitter biosynthesis</keyword>
<keyword id="KW-0597">Phosphoprotein</keyword>
<keyword id="KW-1185">Reference proteome</keyword>
<keyword id="KW-0808">Transferase</keyword>
<reference key="1">
    <citation type="journal article" date="1990" name="Brain Res. Mol. Brain Res.">
        <title>Complementary DNAs for choline acetyltransferase from spinal cords of rat and mouse: nucleotide sequences, expression in mammalian cells, and in situ hybridization.</title>
        <authorList>
            <person name="Ishii K."/>
            <person name="Oda Y."/>
            <person name="Ichikawa T."/>
            <person name="Deguchi T."/>
        </authorList>
    </citation>
    <scope>NUCLEOTIDE SEQUENCE [GENOMIC DNA]</scope>
    <source>
        <tissue>Spinal cord</tissue>
    </source>
</reference>
<reference key="2">
    <citation type="journal article" date="1993" name="Brain Res. Mol. Brain Res.">
        <title>Multiple mRNA species of choline acetyltransferase from rat spinal cord.</title>
        <authorList>
            <person name="Kengaku M."/>
            <person name="Misawa H."/>
            <person name="Deguchi T."/>
        </authorList>
    </citation>
    <scope>NUCLEOTIDE SEQUENCE [GENOMIC DNA] OF 1-32</scope>
    <source>
        <tissue>Spinal cord</tissue>
    </source>
</reference>
<reference key="3">
    <citation type="journal article" date="1995" name="J. Biol. Chem.">
        <title>Identification of an active site arginine in rat choline acetyltransferase by alanine scanning mutagenesis.</title>
        <authorList>
            <person name="Wu D."/>
            <person name="Hersh L.B."/>
        </authorList>
    </citation>
    <scope>MUTAGENESIS OF ARG-453</scope>
</reference>
<reference key="4">
    <citation type="journal article" date="2012" name="Nat. Commun.">
        <title>Quantitative maps of protein phosphorylation sites across 14 different rat organs and tissues.</title>
        <authorList>
            <person name="Lundby A."/>
            <person name="Secher A."/>
            <person name="Lage K."/>
            <person name="Nordsborg N.B."/>
            <person name="Dmytriyev A."/>
            <person name="Lundby C."/>
            <person name="Olsen J.V."/>
        </authorList>
    </citation>
    <scope>PHOSPHORYLATION [LARGE SCALE ANALYSIS] AT SER-17 AND SER-365</scope>
    <scope>IDENTIFICATION BY MASS SPECTROMETRY [LARGE SCALE ANALYSIS]</scope>
</reference>
<reference key="5">
    <citation type="journal article" date="2004" name="J. Struct. Biol.">
        <title>Structural insights and functional implications of choline acetyltransferase.</title>
        <authorList>
            <person name="Govindasamy L."/>
            <person name="Pedersen B."/>
            <person name="Lian W."/>
            <person name="Kukar T."/>
            <person name="Gu Y."/>
            <person name="Jin S."/>
            <person name="Agbandje-McKenna M."/>
            <person name="Wu D."/>
            <person name="McKenna R."/>
        </authorList>
    </citation>
    <scope>X-RAY CRYSTALLOGRAPHY (1.55 ANGSTROMS)</scope>
    <scope>SUBUNIT</scope>
</reference>
<reference key="6">
    <citation type="journal article" date="2004" name="EMBO J.">
        <title>Choline acetyltransferase structure reveals distribution of mutations that cause motor disorders.</title>
        <authorList>
            <person name="Cai Y."/>
            <person name="Cronin C.N."/>
            <person name="Engel A.G."/>
            <person name="Ohno K."/>
            <person name="Hersh L.B."/>
            <person name="Rodgers D.W."/>
        </authorList>
    </citation>
    <scope>X-RAY CRYSTALLOGRAPHY (2.5 ANGSTROMS) OF 1-634 IN COMPLEX WITH COENZYME A</scope>
</reference>
<feature type="chain" id="PRO_0000210157" description="Choline O-acetyltransferase">
    <location>
        <begin position="1"/>
        <end position="640"/>
    </location>
</feature>
<feature type="region of interest" description="Disordered" evidence="2">
    <location>
        <begin position="614"/>
        <end position="640"/>
    </location>
</feature>
<feature type="active site" description="Proton acceptor" evidence="1">
    <location>
        <position position="334"/>
    </location>
</feature>
<feature type="binding site" evidence="6">
    <location>
        <begin position="412"/>
        <end position="424"/>
    </location>
    <ligand>
        <name>CoA</name>
        <dbReference type="ChEBI" id="CHEBI:57287"/>
    </ligand>
</feature>
<feature type="binding site" evidence="1">
    <location>
        <position position="450"/>
    </location>
    <ligand>
        <name>CoA</name>
        <dbReference type="ChEBI" id="CHEBI:57287"/>
    </ligand>
</feature>
<feature type="binding site" evidence="1">
    <location>
        <position position="551"/>
    </location>
    <ligand>
        <name>CoA</name>
        <dbReference type="ChEBI" id="CHEBI:57287"/>
    </ligand>
</feature>
<feature type="modified residue" description="Phosphoserine" evidence="7">
    <location>
        <position position="17"/>
    </location>
</feature>
<feature type="modified residue" description="Phosphoserine" evidence="7">
    <location>
        <position position="365"/>
    </location>
</feature>
<feature type="mutagenesis site" description="Increases KM for coenzyme A and acetylcholine." evidence="5">
    <original>R</original>
    <variation>A</variation>
    <variation>E</variation>
    <variation>Q</variation>
    <location>
        <position position="453"/>
    </location>
</feature>
<feature type="helix" evidence="9">
    <location>
        <begin position="31"/>
        <end position="42"/>
    </location>
</feature>
<feature type="helix" evidence="9">
    <location>
        <begin position="43"/>
        <end position="45"/>
    </location>
</feature>
<feature type="helix" evidence="9">
    <location>
        <begin position="48"/>
        <end position="61"/>
    </location>
</feature>
<feature type="helix" evidence="9">
    <location>
        <begin position="67"/>
        <end position="81"/>
    </location>
</feature>
<feature type="strand" evidence="9">
    <location>
        <begin position="82"/>
        <end position="84"/>
    </location>
</feature>
<feature type="helix" evidence="9">
    <location>
        <begin position="87"/>
        <end position="94"/>
    </location>
</feature>
<feature type="turn" evidence="9">
    <location>
        <begin position="95"/>
        <end position="97"/>
    </location>
</feature>
<feature type="helix" evidence="9">
    <location>
        <begin position="102"/>
        <end position="105"/>
    </location>
</feature>
<feature type="strand" evidence="9">
    <location>
        <begin position="109"/>
        <end position="112"/>
    </location>
</feature>
<feature type="helix" evidence="9">
    <location>
        <begin position="120"/>
        <end position="143"/>
    </location>
</feature>
<feature type="strand" evidence="9">
    <location>
        <begin position="151"/>
        <end position="153"/>
    </location>
</feature>
<feature type="strand" evidence="9">
    <location>
        <begin position="156"/>
        <end position="158"/>
    </location>
</feature>
<feature type="helix" evidence="9">
    <location>
        <begin position="165"/>
        <end position="167"/>
    </location>
</feature>
<feature type="turn" evidence="9">
    <location>
        <begin position="168"/>
        <end position="170"/>
    </location>
</feature>
<feature type="strand" evidence="9">
    <location>
        <begin position="171"/>
        <end position="174"/>
    </location>
</feature>
<feature type="strand" evidence="9">
    <location>
        <begin position="177"/>
        <end position="179"/>
    </location>
</feature>
<feature type="strand" evidence="9">
    <location>
        <begin position="181"/>
        <end position="184"/>
    </location>
</feature>
<feature type="strand" evidence="9">
    <location>
        <begin position="188"/>
        <end position="191"/>
    </location>
</feature>
<feature type="strand" evidence="9">
    <location>
        <begin position="195"/>
        <end position="200"/>
    </location>
</feature>
<feature type="strand" evidence="9">
    <location>
        <begin position="203"/>
        <end position="211"/>
    </location>
</feature>
<feature type="helix" evidence="9">
    <location>
        <begin position="218"/>
        <end position="232"/>
    </location>
</feature>
<feature type="helix" evidence="8">
    <location>
        <begin position="235"/>
        <end position="237"/>
    </location>
</feature>
<feature type="helix" evidence="9">
    <location>
        <begin position="242"/>
        <end position="247"/>
    </location>
</feature>
<feature type="helix" evidence="9">
    <location>
        <begin position="250"/>
        <end position="260"/>
    </location>
</feature>
<feature type="helix" evidence="9">
    <location>
        <begin position="264"/>
        <end position="274"/>
    </location>
</feature>
<feature type="strand" evidence="9">
    <location>
        <begin position="279"/>
        <end position="282"/>
    </location>
</feature>
<feature type="helix" evidence="9">
    <location>
        <begin position="292"/>
        <end position="301"/>
    </location>
</feature>
<feature type="turn" evidence="9">
    <location>
        <begin position="305"/>
        <end position="310"/>
    </location>
</feature>
<feature type="strand" evidence="9">
    <location>
        <begin position="316"/>
        <end position="322"/>
    </location>
</feature>
<feature type="strand" evidence="9">
    <location>
        <begin position="328"/>
        <end position="332"/>
    </location>
</feature>
<feature type="helix" evidence="9">
    <location>
        <begin position="339"/>
        <end position="353"/>
    </location>
</feature>
<feature type="strand" evidence="9">
    <location>
        <begin position="361"/>
        <end position="363"/>
    </location>
</feature>
<feature type="helix" evidence="9">
    <location>
        <begin position="381"/>
        <end position="400"/>
    </location>
</feature>
<feature type="strand" evidence="9">
    <location>
        <begin position="401"/>
        <end position="408"/>
    </location>
</feature>
<feature type="helix" evidence="9">
    <location>
        <begin position="413"/>
        <end position="418"/>
    </location>
</feature>
<feature type="helix" evidence="9">
    <location>
        <begin position="423"/>
        <end position="439"/>
    </location>
</feature>
<feature type="strand" evidence="9">
    <location>
        <begin position="445"/>
        <end position="450"/>
    </location>
</feature>
<feature type="strand" evidence="9">
    <location>
        <begin position="459"/>
        <end position="462"/>
    </location>
</feature>
<feature type="helix" evidence="9">
    <location>
        <begin position="467"/>
        <end position="474"/>
    </location>
</feature>
<feature type="strand" evidence="9">
    <location>
        <begin position="476"/>
        <end position="479"/>
    </location>
</feature>
<feature type="strand" evidence="9">
    <location>
        <begin position="481"/>
        <end position="483"/>
    </location>
</feature>
<feature type="helix" evidence="9">
    <location>
        <begin position="485"/>
        <end position="507"/>
    </location>
</feature>
<feature type="helix" evidence="9">
    <location>
        <begin position="513"/>
        <end position="525"/>
    </location>
</feature>
<feature type="helix" evidence="9">
    <location>
        <begin position="532"/>
        <end position="535"/>
    </location>
</feature>
<feature type="helix" evidence="9">
    <location>
        <begin position="537"/>
        <end position="542"/>
    </location>
</feature>
<feature type="strand" evidence="9">
    <location>
        <begin position="546"/>
        <end position="551"/>
    </location>
</feature>
<feature type="strand" evidence="9">
    <location>
        <begin position="555"/>
        <end position="561"/>
    </location>
</feature>
<feature type="strand" evidence="9">
    <location>
        <begin position="570"/>
        <end position="576"/>
    </location>
</feature>
<feature type="strand" evidence="9">
    <location>
        <begin position="581"/>
        <end position="588"/>
    </location>
</feature>
<feature type="helix" evidence="9">
    <location>
        <begin position="596"/>
        <end position="614"/>
    </location>
</feature>
<evidence type="ECO:0000250" key="1"/>
<evidence type="ECO:0000256" key="2">
    <source>
        <dbReference type="SAM" id="MobiDB-lite"/>
    </source>
</evidence>
<evidence type="ECO:0000269" key="3">
    <source>
    </source>
</evidence>
<evidence type="ECO:0000269" key="4">
    <source>
    </source>
</evidence>
<evidence type="ECO:0000269" key="5">
    <source>
    </source>
</evidence>
<evidence type="ECO:0000305" key="6"/>
<evidence type="ECO:0007744" key="7">
    <source>
    </source>
</evidence>
<evidence type="ECO:0007829" key="8">
    <source>
        <dbReference type="PDB" id="1Q6X"/>
    </source>
</evidence>
<evidence type="ECO:0007829" key="9">
    <source>
        <dbReference type="PDB" id="1T1U"/>
    </source>
</evidence>
<gene>
    <name type="primary">Chat</name>
</gene>
<name>CLAT_RAT</name>
<comment type="function">
    <text>Catalyzes the reversible synthesis of acetylcholine (ACh) from acetyl CoA and choline at cholinergic synapses.</text>
</comment>
<comment type="catalytic activity">
    <reaction>
        <text>choline + acetyl-CoA = acetylcholine + CoA</text>
        <dbReference type="Rhea" id="RHEA:18821"/>
        <dbReference type="ChEBI" id="CHEBI:15354"/>
        <dbReference type="ChEBI" id="CHEBI:15355"/>
        <dbReference type="ChEBI" id="CHEBI:57287"/>
        <dbReference type="ChEBI" id="CHEBI:57288"/>
        <dbReference type="EC" id="2.3.1.6"/>
    </reaction>
</comment>
<comment type="subunit">
    <text evidence="3 4">Monomer.</text>
</comment>
<comment type="similarity">
    <text evidence="6">Belongs to the carnitine/choline acetyltransferase family.</text>
</comment>
<organism>
    <name type="scientific">Rattus norvegicus</name>
    <name type="common">Rat</name>
    <dbReference type="NCBI Taxonomy" id="10116"/>
    <lineage>
        <taxon>Eukaryota</taxon>
        <taxon>Metazoa</taxon>
        <taxon>Chordata</taxon>
        <taxon>Craniata</taxon>
        <taxon>Vertebrata</taxon>
        <taxon>Euteleostomi</taxon>
        <taxon>Mammalia</taxon>
        <taxon>Eutheria</taxon>
        <taxon>Euarchontoglires</taxon>
        <taxon>Glires</taxon>
        <taxon>Rodentia</taxon>
        <taxon>Myomorpha</taxon>
        <taxon>Muroidea</taxon>
        <taxon>Muridae</taxon>
        <taxon>Murinae</taxon>
        <taxon>Rattus</taxon>
    </lineage>
</organism>
<dbReference type="EC" id="2.3.1.6"/>
<dbReference type="EMBL" id="M88488">
    <property type="status" value="NOT_ANNOTATED_CDS"/>
    <property type="molecule type" value="Genomic_DNA"/>
</dbReference>
<dbReference type="PIR" id="A48319">
    <property type="entry name" value="A48319"/>
</dbReference>
<dbReference type="PDB" id="1Q6X">
    <property type="method" value="X-ray"/>
    <property type="resolution" value="2.50 A"/>
    <property type="chains" value="A/B=1-634"/>
</dbReference>
<dbReference type="PDB" id="1T1U">
    <property type="method" value="X-ray"/>
    <property type="resolution" value="1.55 A"/>
    <property type="chains" value="A=2-640"/>
</dbReference>
<dbReference type="PDBsum" id="1Q6X"/>
<dbReference type="PDBsum" id="1T1U"/>
<dbReference type="SMR" id="P32738"/>
<dbReference type="FunCoup" id="P32738">
    <property type="interactions" value="131"/>
</dbReference>
<dbReference type="STRING" id="10116.ENSRNOP00000070752"/>
<dbReference type="BindingDB" id="P32738"/>
<dbReference type="ChEMBL" id="CHEMBL3945"/>
<dbReference type="DrugCentral" id="P32738"/>
<dbReference type="iPTMnet" id="P32738"/>
<dbReference type="PhosphoSitePlus" id="P32738"/>
<dbReference type="PaxDb" id="10116-ENSRNOP00000036251"/>
<dbReference type="UCSC" id="RGD:1304627">
    <property type="organism name" value="rat"/>
</dbReference>
<dbReference type="AGR" id="RGD:1304627"/>
<dbReference type="RGD" id="1304627">
    <property type="gene designation" value="Chat"/>
</dbReference>
<dbReference type="eggNOG" id="KOG3717">
    <property type="taxonomic scope" value="Eukaryota"/>
</dbReference>
<dbReference type="InParanoid" id="P32738"/>
<dbReference type="BRENDA" id="2.3.1.6">
    <property type="organism ID" value="5301"/>
</dbReference>
<dbReference type="Reactome" id="R-RNO-1483191">
    <property type="pathway name" value="Synthesis of PC"/>
</dbReference>
<dbReference type="Reactome" id="R-RNO-264642">
    <property type="pathway name" value="Acetylcholine Neurotransmitter Release Cycle"/>
</dbReference>
<dbReference type="EvolutionaryTrace" id="P32738"/>
<dbReference type="PRO" id="PR:P32738"/>
<dbReference type="Proteomes" id="UP000002494">
    <property type="component" value="Unplaced"/>
</dbReference>
<dbReference type="GO" id="GO:0030424">
    <property type="term" value="C:axon"/>
    <property type="evidence" value="ECO:0000266"/>
    <property type="project" value="RGD"/>
</dbReference>
<dbReference type="GO" id="GO:0005737">
    <property type="term" value="C:cytoplasm"/>
    <property type="evidence" value="ECO:0000266"/>
    <property type="project" value="RGD"/>
</dbReference>
<dbReference type="GO" id="GO:0043005">
    <property type="term" value="C:neuron projection"/>
    <property type="evidence" value="ECO:0000266"/>
    <property type="project" value="RGD"/>
</dbReference>
<dbReference type="GO" id="GO:0043025">
    <property type="term" value="C:neuronal cell body"/>
    <property type="evidence" value="ECO:0000266"/>
    <property type="project" value="RGD"/>
</dbReference>
<dbReference type="GO" id="GO:0045202">
    <property type="term" value="C:synapse"/>
    <property type="evidence" value="ECO:0007669"/>
    <property type="project" value="GOC"/>
</dbReference>
<dbReference type="GO" id="GO:0033265">
    <property type="term" value="F:choline binding"/>
    <property type="evidence" value="ECO:0000314"/>
    <property type="project" value="RGD"/>
</dbReference>
<dbReference type="GO" id="GO:0004102">
    <property type="term" value="F:choline O-acetyltransferase activity"/>
    <property type="evidence" value="ECO:0000314"/>
    <property type="project" value="RGD"/>
</dbReference>
<dbReference type="GO" id="GO:0008292">
    <property type="term" value="P:acetylcholine biosynthetic process"/>
    <property type="evidence" value="ECO:0000314"/>
    <property type="project" value="RGD"/>
</dbReference>
<dbReference type="GO" id="GO:0007628">
    <property type="term" value="P:adult walking behavior"/>
    <property type="evidence" value="ECO:0000266"/>
    <property type="project" value="RGD"/>
</dbReference>
<dbReference type="GO" id="GO:0001547">
    <property type="term" value="P:antral ovarian follicle growth"/>
    <property type="evidence" value="ECO:0000270"/>
    <property type="project" value="RGD"/>
</dbReference>
<dbReference type="GO" id="GO:0007268">
    <property type="term" value="P:chemical synaptic transmission"/>
    <property type="evidence" value="ECO:0000266"/>
    <property type="project" value="RGD"/>
</dbReference>
<dbReference type="GO" id="GO:0016358">
    <property type="term" value="P:dendrite development"/>
    <property type="evidence" value="ECO:0000266"/>
    <property type="project" value="RGD"/>
</dbReference>
<dbReference type="GO" id="GO:0007529">
    <property type="term" value="P:establishment of synaptic specificity at neuromuscular junction"/>
    <property type="evidence" value="ECO:0000266"/>
    <property type="project" value="RGD"/>
</dbReference>
<dbReference type="GO" id="GO:0007613">
    <property type="term" value="P:memory"/>
    <property type="evidence" value="ECO:0000315"/>
    <property type="project" value="RGD"/>
</dbReference>
<dbReference type="GO" id="GO:0007517">
    <property type="term" value="P:muscle organ development"/>
    <property type="evidence" value="ECO:0000266"/>
    <property type="project" value="RGD"/>
</dbReference>
<dbReference type="GO" id="GO:0007274">
    <property type="term" value="P:neuromuscular synaptic transmission"/>
    <property type="evidence" value="ECO:0000266"/>
    <property type="project" value="RGD"/>
</dbReference>
<dbReference type="GO" id="GO:0030182">
    <property type="term" value="P:neuron differentiation"/>
    <property type="evidence" value="ECO:0000266"/>
    <property type="project" value="RGD"/>
</dbReference>
<dbReference type="GO" id="GO:0045471">
    <property type="term" value="P:response to ethanol"/>
    <property type="evidence" value="ECO:0000270"/>
    <property type="project" value="RGD"/>
</dbReference>
<dbReference type="GO" id="GO:0001666">
    <property type="term" value="P:response to hypoxia"/>
    <property type="evidence" value="ECO:0000270"/>
    <property type="project" value="RGD"/>
</dbReference>
<dbReference type="GO" id="GO:0007584">
    <property type="term" value="P:response to nutrient"/>
    <property type="evidence" value="ECO:0000270"/>
    <property type="project" value="RGD"/>
</dbReference>
<dbReference type="GO" id="GO:0009410">
    <property type="term" value="P:response to xenobiotic stimulus"/>
    <property type="evidence" value="ECO:0000270"/>
    <property type="project" value="RGD"/>
</dbReference>
<dbReference type="GO" id="GO:0007622">
    <property type="term" value="P:rhythmic behavior"/>
    <property type="evidence" value="ECO:0000266"/>
    <property type="project" value="RGD"/>
</dbReference>
<dbReference type="GO" id="GO:0043179">
    <property type="term" value="P:rhythmic excitation"/>
    <property type="evidence" value="ECO:0000266"/>
    <property type="project" value="RGD"/>
</dbReference>
<dbReference type="FunFam" id="3.30.559.10:FF:000001">
    <property type="entry name" value="Carnitine O-acetyltransferase"/>
    <property type="match status" value="1"/>
</dbReference>
<dbReference type="FunFam" id="3.30.559.70:FF:000004">
    <property type="entry name" value="Choline O-acetyltransferase"/>
    <property type="match status" value="1"/>
</dbReference>
<dbReference type="Gene3D" id="3.30.559.10">
    <property type="entry name" value="Chloramphenicol acetyltransferase-like domain"/>
    <property type="match status" value="1"/>
</dbReference>
<dbReference type="Gene3D" id="3.30.559.70">
    <property type="entry name" value="Choline/Carnitine o-acyltransferase, domain 2"/>
    <property type="match status" value="1"/>
</dbReference>
<dbReference type="InterPro" id="IPR000542">
    <property type="entry name" value="Carn_acyl_trans"/>
</dbReference>
<dbReference type="InterPro" id="IPR023213">
    <property type="entry name" value="CAT-like_dom_sf"/>
</dbReference>
<dbReference type="InterPro" id="IPR039551">
    <property type="entry name" value="Cho/carn_acyl_trans"/>
</dbReference>
<dbReference type="InterPro" id="IPR042231">
    <property type="entry name" value="Cho/carn_acyl_trans_2"/>
</dbReference>
<dbReference type="PANTHER" id="PTHR22589">
    <property type="entry name" value="CARNITINE O-ACYLTRANSFERASE"/>
    <property type="match status" value="1"/>
</dbReference>
<dbReference type="PANTHER" id="PTHR22589:SF14">
    <property type="entry name" value="CHOLINE O-ACETYLTRANSFERASE"/>
    <property type="match status" value="1"/>
</dbReference>
<dbReference type="Pfam" id="PF00755">
    <property type="entry name" value="Carn_acyltransf"/>
    <property type="match status" value="1"/>
</dbReference>
<dbReference type="SUPFAM" id="SSF52777">
    <property type="entry name" value="CoA-dependent acyltransferases"/>
    <property type="match status" value="2"/>
</dbReference>
<dbReference type="PROSITE" id="PS00439">
    <property type="entry name" value="ACYLTRANSF_C_1"/>
    <property type="match status" value="1"/>
</dbReference>
<dbReference type="PROSITE" id="PS00440">
    <property type="entry name" value="ACYLTRANSF_C_2"/>
    <property type="match status" value="1"/>
</dbReference>
<accession>P32738</accession>
<accession>Q63849</accession>
<accession>Q64342</accession>